<accession>B8D8E6</accession>
<gene>
    <name evidence="1" type="primary">coaD</name>
    <name type="ordered locus">BUAP5A_576</name>
</gene>
<protein>
    <recommendedName>
        <fullName evidence="1">Phosphopantetheine adenylyltransferase</fullName>
        <ecNumber evidence="1">2.7.7.3</ecNumber>
    </recommendedName>
    <alternativeName>
        <fullName evidence="1">Dephospho-CoA pyrophosphorylase</fullName>
    </alternativeName>
    <alternativeName>
        <fullName evidence="1">Pantetheine-phosphate adenylyltransferase</fullName>
        <shortName evidence="1">PPAT</shortName>
    </alternativeName>
</protein>
<keyword id="KW-0067">ATP-binding</keyword>
<keyword id="KW-0173">Coenzyme A biosynthesis</keyword>
<keyword id="KW-0963">Cytoplasm</keyword>
<keyword id="KW-0460">Magnesium</keyword>
<keyword id="KW-0547">Nucleotide-binding</keyword>
<keyword id="KW-0548">Nucleotidyltransferase</keyword>
<keyword id="KW-0808">Transferase</keyword>
<feature type="chain" id="PRO_1000123269" description="Phosphopantetheine adenylyltransferase">
    <location>
        <begin position="1"/>
        <end position="165"/>
    </location>
</feature>
<feature type="binding site" evidence="1">
    <location>
        <begin position="10"/>
        <end position="11"/>
    </location>
    <ligand>
        <name>ATP</name>
        <dbReference type="ChEBI" id="CHEBI:30616"/>
    </ligand>
</feature>
<feature type="binding site" evidence="1">
    <location>
        <position position="10"/>
    </location>
    <ligand>
        <name>substrate</name>
    </ligand>
</feature>
<feature type="binding site" evidence="1">
    <location>
        <position position="18"/>
    </location>
    <ligand>
        <name>ATP</name>
        <dbReference type="ChEBI" id="CHEBI:30616"/>
    </ligand>
</feature>
<feature type="binding site" evidence="1">
    <location>
        <position position="42"/>
    </location>
    <ligand>
        <name>substrate</name>
    </ligand>
</feature>
<feature type="binding site" evidence="1">
    <location>
        <position position="75"/>
    </location>
    <ligand>
        <name>substrate</name>
    </ligand>
</feature>
<feature type="binding site" evidence="1">
    <location>
        <position position="89"/>
    </location>
    <ligand>
        <name>substrate</name>
    </ligand>
</feature>
<feature type="binding site" evidence="1">
    <location>
        <begin position="90"/>
        <end position="92"/>
    </location>
    <ligand>
        <name>ATP</name>
        <dbReference type="ChEBI" id="CHEBI:30616"/>
    </ligand>
</feature>
<feature type="binding site" evidence="1">
    <location>
        <position position="100"/>
    </location>
    <ligand>
        <name>ATP</name>
        <dbReference type="ChEBI" id="CHEBI:30616"/>
    </ligand>
</feature>
<feature type="binding site" evidence="1">
    <location>
        <begin position="125"/>
        <end position="131"/>
    </location>
    <ligand>
        <name>ATP</name>
        <dbReference type="ChEBI" id="CHEBI:30616"/>
    </ligand>
</feature>
<feature type="site" description="Transition state stabilizer" evidence="1">
    <location>
        <position position="18"/>
    </location>
</feature>
<dbReference type="EC" id="2.7.7.3" evidence="1"/>
<dbReference type="EMBL" id="CP001161">
    <property type="protein sequence ID" value="ACL30922.1"/>
    <property type="molecule type" value="Genomic_DNA"/>
</dbReference>
<dbReference type="RefSeq" id="WP_010896174.1">
    <property type="nucleotide sequence ID" value="NC_011833.1"/>
</dbReference>
<dbReference type="SMR" id="B8D8E6"/>
<dbReference type="KEGG" id="bap:BUAP5A_576"/>
<dbReference type="HOGENOM" id="CLU_100149_0_1_6"/>
<dbReference type="OrthoDB" id="9806661at2"/>
<dbReference type="UniPathway" id="UPA00241">
    <property type="reaction ID" value="UER00355"/>
</dbReference>
<dbReference type="Proteomes" id="UP000006904">
    <property type="component" value="Chromosome"/>
</dbReference>
<dbReference type="GO" id="GO:0005737">
    <property type="term" value="C:cytoplasm"/>
    <property type="evidence" value="ECO:0007669"/>
    <property type="project" value="UniProtKB-SubCell"/>
</dbReference>
<dbReference type="GO" id="GO:0005524">
    <property type="term" value="F:ATP binding"/>
    <property type="evidence" value="ECO:0007669"/>
    <property type="project" value="UniProtKB-KW"/>
</dbReference>
<dbReference type="GO" id="GO:0004595">
    <property type="term" value="F:pantetheine-phosphate adenylyltransferase activity"/>
    <property type="evidence" value="ECO:0007669"/>
    <property type="project" value="UniProtKB-UniRule"/>
</dbReference>
<dbReference type="GO" id="GO:0015937">
    <property type="term" value="P:coenzyme A biosynthetic process"/>
    <property type="evidence" value="ECO:0007669"/>
    <property type="project" value="UniProtKB-UniRule"/>
</dbReference>
<dbReference type="CDD" id="cd02163">
    <property type="entry name" value="PPAT"/>
    <property type="match status" value="1"/>
</dbReference>
<dbReference type="Gene3D" id="3.40.50.620">
    <property type="entry name" value="HUPs"/>
    <property type="match status" value="1"/>
</dbReference>
<dbReference type="HAMAP" id="MF_00151">
    <property type="entry name" value="PPAT_bact"/>
    <property type="match status" value="1"/>
</dbReference>
<dbReference type="InterPro" id="IPR004821">
    <property type="entry name" value="Cyt_trans-like"/>
</dbReference>
<dbReference type="InterPro" id="IPR001980">
    <property type="entry name" value="PPAT"/>
</dbReference>
<dbReference type="InterPro" id="IPR014729">
    <property type="entry name" value="Rossmann-like_a/b/a_fold"/>
</dbReference>
<dbReference type="NCBIfam" id="TIGR01510">
    <property type="entry name" value="coaD_prev_kdtB"/>
    <property type="match status" value="1"/>
</dbReference>
<dbReference type="NCBIfam" id="TIGR00125">
    <property type="entry name" value="cyt_tran_rel"/>
    <property type="match status" value="1"/>
</dbReference>
<dbReference type="PANTHER" id="PTHR21342">
    <property type="entry name" value="PHOSPHOPANTETHEINE ADENYLYLTRANSFERASE"/>
    <property type="match status" value="1"/>
</dbReference>
<dbReference type="PANTHER" id="PTHR21342:SF1">
    <property type="entry name" value="PHOSPHOPANTETHEINE ADENYLYLTRANSFERASE"/>
    <property type="match status" value="1"/>
</dbReference>
<dbReference type="Pfam" id="PF01467">
    <property type="entry name" value="CTP_transf_like"/>
    <property type="match status" value="1"/>
</dbReference>
<dbReference type="PRINTS" id="PR01020">
    <property type="entry name" value="LPSBIOSNTHSS"/>
</dbReference>
<dbReference type="SUPFAM" id="SSF52374">
    <property type="entry name" value="Nucleotidylyl transferase"/>
    <property type="match status" value="1"/>
</dbReference>
<sequence length="165" mass="18847">MNKTAIYPGTFDPITYGHLDIITRATKIFDSITIAISNNFTKKPIFNLKERIELTRKVTLHLKNVKKILGFNDLLANLAKKEKANILIRGVRTIFDFDYEIKLAAINKQIYPDLDSIFLLSSKEVSFISSSFVKEIAKYKGDIKPYLPKEAHSALLRKLNNDSIK</sequence>
<proteinExistence type="inferred from homology"/>
<reference key="1">
    <citation type="journal article" date="2009" name="Science">
        <title>The dynamics and time scale of ongoing genomic erosion in symbiotic bacteria.</title>
        <authorList>
            <person name="Moran N.A."/>
            <person name="McLaughlin H.J."/>
            <person name="Sorek R."/>
        </authorList>
    </citation>
    <scope>NUCLEOTIDE SEQUENCE [LARGE SCALE GENOMIC DNA]</scope>
    <source>
        <strain>5A</strain>
    </source>
</reference>
<name>COAD_BUCA5</name>
<organism>
    <name type="scientific">Buchnera aphidicola subsp. Acyrthosiphon pisum (strain 5A)</name>
    <dbReference type="NCBI Taxonomy" id="563178"/>
    <lineage>
        <taxon>Bacteria</taxon>
        <taxon>Pseudomonadati</taxon>
        <taxon>Pseudomonadota</taxon>
        <taxon>Gammaproteobacteria</taxon>
        <taxon>Enterobacterales</taxon>
        <taxon>Erwiniaceae</taxon>
        <taxon>Buchnera</taxon>
    </lineage>
</organism>
<evidence type="ECO:0000255" key="1">
    <source>
        <dbReference type="HAMAP-Rule" id="MF_00151"/>
    </source>
</evidence>
<comment type="function">
    <text evidence="1">Reversibly transfers an adenylyl group from ATP to 4'-phosphopantetheine, yielding dephospho-CoA (dPCoA) and pyrophosphate.</text>
</comment>
<comment type="catalytic activity">
    <reaction evidence="1">
        <text>(R)-4'-phosphopantetheine + ATP + H(+) = 3'-dephospho-CoA + diphosphate</text>
        <dbReference type="Rhea" id="RHEA:19801"/>
        <dbReference type="ChEBI" id="CHEBI:15378"/>
        <dbReference type="ChEBI" id="CHEBI:30616"/>
        <dbReference type="ChEBI" id="CHEBI:33019"/>
        <dbReference type="ChEBI" id="CHEBI:57328"/>
        <dbReference type="ChEBI" id="CHEBI:61723"/>
        <dbReference type="EC" id="2.7.7.3"/>
    </reaction>
</comment>
<comment type="cofactor">
    <cofactor evidence="1">
        <name>Mg(2+)</name>
        <dbReference type="ChEBI" id="CHEBI:18420"/>
    </cofactor>
</comment>
<comment type="pathway">
    <text evidence="1">Cofactor biosynthesis; coenzyme A biosynthesis; CoA from (R)-pantothenate: step 4/5.</text>
</comment>
<comment type="subunit">
    <text evidence="1">Homohexamer.</text>
</comment>
<comment type="subcellular location">
    <subcellularLocation>
        <location evidence="1">Cytoplasm</location>
    </subcellularLocation>
</comment>
<comment type="similarity">
    <text evidence="1">Belongs to the bacterial CoaD family.</text>
</comment>